<evidence type="ECO:0000255" key="1">
    <source>
        <dbReference type="HAMAP-Rule" id="MF_00503"/>
    </source>
</evidence>
<evidence type="ECO:0000305" key="2"/>
<proteinExistence type="inferred from homology"/>
<dbReference type="EMBL" id="CP000124">
    <property type="protein sequence ID" value="ABA48676.1"/>
    <property type="molecule type" value="Genomic_DNA"/>
</dbReference>
<dbReference type="RefSeq" id="WP_004191711.1">
    <property type="nucleotide sequence ID" value="NC_007434.1"/>
</dbReference>
<dbReference type="SMR" id="Q3JRJ5"/>
<dbReference type="EnsemblBacteria" id="ABA48676">
    <property type="protein sequence ID" value="ABA48676"/>
    <property type="gene ID" value="BURPS1710b_2413"/>
</dbReference>
<dbReference type="GeneID" id="93060530"/>
<dbReference type="KEGG" id="bpm:BURPS1710b_2413"/>
<dbReference type="HOGENOM" id="CLU_078938_4_1_4"/>
<dbReference type="Proteomes" id="UP000002700">
    <property type="component" value="Chromosome I"/>
</dbReference>
<dbReference type="GO" id="GO:1990904">
    <property type="term" value="C:ribonucleoprotein complex"/>
    <property type="evidence" value="ECO:0007669"/>
    <property type="project" value="UniProtKB-KW"/>
</dbReference>
<dbReference type="GO" id="GO:0005840">
    <property type="term" value="C:ribosome"/>
    <property type="evidence" value="ECO:0007669"/>
    <property type="project" value="UniProtKB-KW"/>
</dbReference>
<dbReference type="GO" id="GO:0019843">
    <property type="term" value="F:rRNA binding"/>
    <property type="evidence" value="ECO:0007669"/>
    <property type="project" value="UniProtKB-UniRule"/>
</dbReference>
<dbReference type="GO" id="GO:0003735">
    <property type="term" value="F:structural constituent of ribosome"/>
    <property type="evidence" value="ECO:0007669"/>
    <property type="project" value="InterPro"/>
</dbReference>
<dbReference type="GO" id="GO:0006412">
    <property type="term" value="P:translation"/>
    <property type="evidence" value="ECO:0007669"/>
    <property type="project" value="UniProtKB-UniRule"/>
</dbReference>
<dbReference type="Gene3D" id="3.10.430.100">
    <property type="entry name" value="Ribosomal protein L9, C-terminal domain"/>
    <property type="match status" value="1"/>
</dbReference>
<dbReference type="Gene3D" id="3.40.5.10">
    <property type="entry name" value="Ribosomal protein L9, N-terminal domain"/>
    <property type="match status" value="1"/>
</dbReference>
<dbReference type="HAMAP" id="MF_00503">
    <property type="entry name" value="Ribosomal_bL9"/>
    <property type="match status" value="1"/>
</dbReference>
<dbReference type="InterPro" id="IPR000244">
    <property type="entry name" value="Ribosomal_bL9"/>
</dbReference>
<dbReference type="InterPro" id="IPR009027">
    <property type="entry name" value="Ribosomal_bL9/RNase_H1_N"/>
</dbReference>
<dbReference type="InterPro" id="IPR020594">
    <property type="entry name" value="Ribosomal_bL9_bac/chp"/>
</dbReference>
<dbReference type="InterPro" id="IPR020069">
    <property type="entry name" value="Ribosomal_bL9_C"/>
</dbReference>
<dbReference type="InterPro" id="IPR036791">
    <property type="entry name" value="Ribosomal_bL9_C_sf"/>
</dbReference>
<dbReference type="InterPro" id="IPR020070">
    <property type="entry name" value="Ribosomal_bL9_N"/>
</dbReference>
<dbReference type="InterPro" id="IPR036935">
    <property type="entry name" value="Ribosomal_bL9_N_sf"/>
</dbReference>
<dbReference type="NCBIfam" id="TIGR00158">
    <property type="entry name" value="L9"/>
    <property type="match status" value="1"/>
</dbReference>
<dbReference type="PANTHER" id="PTHR21368">
    <property type="entry name" value="50S RIBOSOMAL PROTEIN L9"/>
    <property type="match status" value="1"/>
</dbReference>
<dbReference type="Pfam" id="PF03948">
    <property type="entry name" value="Ribosomal_L9_C"/>
    <property type="match status" value="1"/>
</dbReference>
<dbReference type="Pfam" id="PF01281">
    <property type="entry name" value="Ribosomal_L9_N"/>
    <property type="match status" value="1"/>
</dbReference>
<dbReference type="SUPFAM" id="SSF55658">
    <property type="entry name" value="L9 N-domain-like"/>
    <property type="match status" value="1"/>
</dbReference>
<dbReference type="SUPFAM" id="SSF55653">
    <property type="entry name" value="Ribosomal protein L9 C-domain"/>
    <property type="match status" value="1"/>
</dbReference>
<dbReference type="PROSITE" id="PS00651">
    <property type="entry name" value="RIBOSOMAL_L9"/>
    <property type="match status" value="1"/>
</dbReference>
<reference key="1">
    <citation type="journal article" date="2010" name="Genome Biol. Evol.">
        <title>Continuing evolution of Burkholderia mallei through genome reduction and large-scale rearrangements.</title>
        <authorList>
            <person name="Losada L."/>
            <person name="Ronning C.M."/>
            <person name="DeShazer D."/>
            <person name="Woods D."/>
            <person name="Fedorova N."/>
            <person name="Kim H.S."/>
            <person name="Shabalina S.A."/>
            <person name="Pearson T.R."/>
            <person name="Brinkac L."/>
            <person name="Tan P."/>
            <person name="Nandi T."/>
            <person name="Crabtree J."/>
            <person name="Badger J."/>
            <person name="Beckstrom-Sternberg S."/>
            <person name="Saqib M."/>
            <person name="Schutzer S.E."/>
            <person name="Keim P."/>
            <person name="Nierman W.C."/>
        </authorList>
    </citation>
    <scope>NUCLEOTIDE SEQUENCE [LARGE SCALE GENOMIC DNA]</scope>
    <source>
        <strain>1710b</strain>
    </source>
</reference>
<name>RL9_BURP1</name>
<feature type="chain" id="PRO_0000236499" description="Large ribosomal subunit protein bL9">
    <location>
        <begin position="1"/>
        <end position="150"/>
    </location>
</feature>
<keyword id="KW-0687">Ribonucleoprotein</keyword>
<keyword id="KW-0689">Ribosomal protein</keyword>
<keyword id="KW-0694">RNA-binding</keyword>
<keyword id="KW-0699">rRNA-binding</keyword>
<sequence length="150" mass="16245">MQIILLEKVANLGNLGDIVKVKDGYARNFLIPNRKARRATKDAIAEFEVRRAELEKVAAEKLAAAQAVGEKLNGQTFEITQKSGVDGRLFGSVTNGDVAELLKKAGYEIEKAQVRMPEGPLKMIGEHGVQVALHTDVVVDVTVNVIGDHA</sequence>
<organism>
    <name type="scientific">Burkholderia pseudomallei (strain 1710b)</name>
    <dbReference type="NCBI Taxonomy" id="320372"/>
    <lineage>
        <taxon>Bacteria</taxon>
        <taxon>Pseudomonadati</taxon>
        <taxon>Pseudomonadota</taxon>
        <taxon>Betaproteobacteria</taxon>
        <taxon>Burkholderiales</taxon>
        <taxon>Burkholderiaceae</taxon>
        <taxon>Burkholderia</taxon>
        <taxon>pseudomallei group</taxon>
    </lineage>
</organism>
<protein>
    <recommendedName>
        <fullName evidence="1">Large ribosomal subunit protein bL9</fullName>
    </recommendedName>
    <alternativeName>
        <fullName evidence="2">50S ribosomal protein L9</fullName>
    </alternativeName>
</protein>
<comment type="function">
    <text evidence="1">Binds to the 23S rRNA.</text>
</comment>
<comment type="similarity">
    <text evidence="1">Belongs to the bacterial ribosomal protein bL9 family.</text>
</comment>
<accession>Q3JRJ5</accession>
<gene>
    <name evidence="1" type="primary">rplI</name>
    <name type="ordered locus">BURPS1710b_2413</name>
</gene>